<organism>
    <name type="scientific">Cryptococcus neoformans var. neoformans serotype D (strain JEC21 / ATCC MYA-565)</name>
    <name type="common">Filobasidiella neoformans</name>
    <dbReference type="NCBI Taxonomy" id="214684"/>
    <lineage>
        <taxon>Eukaryota</taxon>
        <taxon>Fungi</taxon>
        <taxon>Dikarya</taxon>
        <taxon>Basidiomycota</taxon>
        <taxon>Agaricomycotina</taxon>
        <taxon>Tremellomycetes</taxon>
        <taxon>Tremellales</taxon>
        <taxon>Cryptococcaceae</taxon>
        <taxon>Cryptococcus</taxon>
        <taxon>Cryptococcus neoformans species complex</taxon>
    </lineage>
</organism>
<sequence length="397" mass="44250">MSTYIPIHDRPPHYANLPSPPSNSRQPRPPRYSSPDIDPDIPLARMSSAHESDPSEQANATQSGDYVPRQRVGSQGAEQEGQSRKRARTSPSHSGGNGSYVPRQRTEESHHSHHNGHSGHAQSDQHGNGQVYRPRHGQAPLTGSIFNLSPRNPFTSVVGDFIMNAAMGHSNVEIELKLGTFMTPSMPGQQPRRINMPTLSEMIIPHDYPNGPFVSTINHLHHRTLNELLNRAVESQSTHPTGRLYFSRSKLADSFYDHSEHGHGKVRVSRDMDNGHVVQAVEKRRIADLNVYCPGMAYDFRISVNTETPCEVPTGNAKSVRYKDRACYRHQVCRVDLTSVFSSNPRNADVPPSRSFELEIEVLDVPALLAEGAAQSERFDEILQNVLDSARMLVKNI</sequence>
<comment type="function">
    <text evidence="2">First step of mRNA capping. Converts the 5'-triphosphate end of a nascent mRNA chain into a diphosphate end.</text>
</comment>
<comment type="catalytic activity">
    <reaction evidence="2">
        <text>a 5'-end triphospho-ribonucleoside in mRNA + H2O = a 5'-end diphospho-ribonucleoside in mRNA + phosphate + H(+)</text>
        <dbReference type="Rhea" id="RHEA:67004"/>
        <dbReference type="Rhea" id="RHEA-COMP:17164"/>
        <dbReference type="Rhea" id="RHEA-COMP:17165"/>
        <dbReference type="ChEBI" id="CHEBI:15377"/>
        <dbReference type="ChEBI" id="CHEBI:15378"/>
        <dbReference type="ChEBI" id="CHEBI:43474"/>
        <dbReference type="ChEBI" id="CHEBI:167616"/>
        <dbReference type="ChEBI" id="CHEBI:167618"/>
        <dbReference type="EC" id="3.6.1.74"/>
    </reaction>
    <physiologicalReaction direction="left-to-right" evidence="2">
        <dbReference type="Rhea" id="RHEA:67005"/>
    </physiologicalReaction>
</comment>
<comment type="cofactor">
    <cofactor evidence="2">
        <name>Mg(2+)</name>
        <dbReference type="ChEBI" id="CHEBI:18420"/>
    </cofactor>
</comment>
<comment type="subunit">
    <text evidence="2">Heterodimer. The mRNA-capping enzyme is composed of two separate chains alpha and beta, respectively a mRNA guanylyltransferase and an mRNA 5'-triphosphate monophosphatase.</text>
</comment>
<comment type="subcellular location">
    <subcellularLocation>
        <location evidence="1">Nucleus</location>
    </subcellularLocation>
</comment>
<comment type="similarity">
    <text evidence="4">Belongs to the fungal TPase family.</text>
</comment>
<name>CET1_CRYNJ</name>
<dbReference type="EC" id="3.6.1.74" evidence="2"/>
<dbReference type="EMBL" id="AE017346">
    <property type="protein sequence ID" value="AAW44125.1"/>
    <property type="molecule type" value="Genomic_DNA"/>
</dbReference>
<dbReference type="RefSeq" id="XP_571432.1">
    <property type="nucleotide sequence ID" value="XM_571432.1"/>
</dbReference>
<dbReference type="SMR" id="Q5KEQ1"/>
<dbReference type="FunCoup" id="Q5KEQ1">
    <property type="interactions" value="38"/>
</dbReference>
<dbReference type="STRING" id="214684.Q5KEQ1"/>
<dbReference type="PaxDb" id="214684-Q5KEQ1"/>
<dbReference type="EnsemblFungi" id="AAW44125">
    <property type="protein sequence ID" value="AAW44125"/>
    <property type="gene ID" value="CNF04680"/>
</dbReference>
<dbReference type="GeneID" id="3258470"/>
<dbReference type="KEGG" id="cne:CNF04680"/>
<dbReference type="VEuPathDB" id="FungiDB:CNF04680"/>
<dbReference type="eggNOG" id="ENOG502RZAX">
    <property type="taxonomic scope" value="Eukaryota"/>
</dbReference>
<dbReference type="HOGENOM" id="CLU_018004_1_0_1"/>
<dbReference type="InParanoid" id="Q5KEQ1"/>
<dbReference type="OMA" id="HHMIMTR"/>
<dbReference type="OrthoDB" id="272147at2759"/>
<dbReference type="Proteomes" id="UP000002149">
    <property type="component" value="Chromosome 6"/>
</dbReference>
<dbReference type="GO" id="GO:0031533">
    <property type="term" value="C:mRNA capping enzyme complex"/>
    <property type="evidence" value="ECO:0000318"/>
    <property type="project" value="GO_Central"/>
</dbReference>
<dbReference type="GO" id="GO:0140818">
    <property type="term" value="F:mRNA 5'-triphosphate monophosphatase activity"/>
    <property type="evidence" value="ECO:0007669"/>
    <property type="project" value="RHEA"/>
</dbReference>
<dbReference type="GO" id="GO:0004651">
    <property type="term" value="F:polynucleotide 5'-phosphatase activity"/>
    <property type="evidence" value="ECO:0000318"/>
    <property type="project" value="GO_Central"/>
</dbReference>
<dbReference type="GO" id="GO:0006370">
    <property type="term" value="P:7-methylguanosine mRNA capping"/>
    <property type="evidence" value="ECO:0000318"/>
    <property type="project" value="GO_Central"/>
</dbReference>
<dbReference type="CDD" id="cd07470">
    <property type="entry name" value="CYTH-like_mRNA_RTPase"/>
    <property type="match status" value="1"/>
</dbReference>
<dbReference type="FunFam" id="3.20.100.10:FF:000003">
    <property type="entry name" value="Unplaced genomic scaffold supercont1.18, whole genome shotgun sequence"/>
    <property type="match status" value="1"/>
</dbReference>
<dbReference type="Gene3D" id="3.20.100.10">
    <property type="entry name" value="mRNA triphosphatase Cet1-like"/>
    <property type="match status" value="1"/>
</dbReference>
<dbReference type="InterPro" id="IPR040343">
    <property type="entry name" value="Cet1/Ctl1"/>
</dbReference>
<dbReference type="InterPro" id="IPR033469">
    <property type="entry name" value="CYTH-like_dom_sf"/>
</dbReference>
<dbReference type="InterPro" id="IPR004206">
    <property type="entry name" value="mRNA_triPase_Cet1"/>
</dbReference>
<dbReference type="InterPro" id="IPR037009">
    <property type="entry name" value="mRNA_triPase_Cet1_sf"/>
</dbReference>
<dbReference type="PANTHER" id="PTHR28118:SF1">
    <property type="entry name" value="POLYNUCLEOTIDE 5'-TRIPHOSPHATASE CTL1-RELATED"/>
    <property type="match status" value="1"/>
</dbReference>
<dbReference type="PANTHER" id="PTHR28118">
    <property type="entry name" value="POLYNUCLEOTIDE 5'-TRIPHOSPHATASE-RELATED"/>
    <property type="match status" value="1"/>
</dbReference>
<dbReference type="Pfam" id="PF02940">
    <property type="entry name" value="mRNA_triPase"/>
    <property type="match status" value="1"/>
</dbReference>
<dbReference type="SUPFAM" id="SSF55154">
    <property type="entry name" value="CYTH-like phosphatases"/>
    <property type="match status" value="1"/>
</dbReference>
<proteinExistence type="inferred from homology"/>
<protein>
    <recommendedName>
        <fullName>mRNA-capping enzyme subunit beta</fullName>
        <ecNumber evidence="2">3.6.1.74</ecNumber>
    </recommendedName>
    <alternativeName>
        <fullName>mRNA 5'-phosphatase</fullName>
    </alternativeName>
    <alternativeName>
        <fullName>mRNA 5'-triphosphate monophosphatase</fullName>
    </alternativeName>
</protein>
<feature type="chain" id="PRO_0000210114" description="mRNA-capping enzyme subunit beta">
    <location>
        <begin position="1"/>
        <end position="397"/>
    </location>
</feature>
<feature type="region of interest" description="Disordered" evidence="3">
    <location>
        <begin position="1"/>
        <end position="149"/>
    </location>
</feature>
<feature type="compositionally biased region" description="Polar residues" evidence="3">
    <location>
        <begin position="55"/>
        <end position="64"/>
    </location>
</feature>
<gene>
    <name type="primary">CET1</name>
    <name type="ordered locus">CNF04680</name>
</gene>
<reference key="1">
    <citation type="journal article" date="2005" name="Science">
        <title>The genome of the basidiomycetous yeast and human pathogen Cryptococcus neoformans.</title>
        <authorList>
            <person name="Loftus B.J."/>
            <person name="Fung E."/>
            <person name="Roncaglia P."/>
            <person name="Rowley D."/>
            <person name="Amedeo P."/>
            <person name="Bruno D."/>
            <person name="Vamathevan J."/>
            <person name="Miranda M."/>
            <person name="Anderson I.J."/>
            <person name="Fraser J.A."/>
            <person name="Allen J.E."/>
            <person name="Bosdet I.E."/>
            <person name="Brent M.R."/>
            <person name="Chiu R."/>
            <person name="Doering T.L."/>
            <person name="Donlin M.J."/>
            <person name="D'Souza C.A."/>
            <person name="Fox D.S."/>
            <person name="Grinberg V."/>
            <person name="Fu J."/>
            <person name="Fukushima M."/>
            <person name="Haas B.J."/>
            <person name="Huang J.C."/>
            <person name="Janbon G."/>
            <person name="Jones S.J.M."/>
            <person name="Koo H.L."/>
            <person name="Krzywinski M.I."/>
            <person name="Kwon-Chung K.J."/>
            <person name="Lengeler K.B."/>
            <person name="Maiti R."/>
            <person name="Marra M.A."/>
            <person name="Marra R.E."/>
            <person name="Mathewson C.A."/>
            <person name="Mitchell T.G."/>
            <person name="Pertea M."/>
            <person name="Riggs F.R."/>
            <person name="Salzberg S.L."/>
            <person name="Schein J.E."/>
            <person name="Shvartsbeyn A."/>
            <person name="Shin H."/>
            <person name="Shumway M."/>
            <person name="Specht C.A."/>
            <person name="Suh B.B."/>
            <person name="Tenney A."/>
            <person name="Utterback T.R."/>
            <person name="Wickes B.L."/>
            <person name="Wortman J.R."/>
            <person name="Wye N.H."/>
            <person name="Kronstad J.W."/>
            <person name="Lodge J.K."/>
            <person name="Heitman J."/>
            <person name="Davis R.W."/>
            <person name="Fraser C.M."/>
            <person name="Hyman R.W."/>
        </authorList>
    </citation>
    <scope>NUCLEOTIDE SEQUENCE [LARGE SCALE GENOMIC DNA]</scope>
    <source>
        <strain>JEC21 / ATCC MYA-565</strain>
    </source>
</reference>
<evidence type="ECO:0000250" key="1"/>
<evidence type="ECO:0000250" key="2">
    <source>
        <dbReference type="UniProtKB" id="O13297"/>
    </source>
</evidence>
<evidence type="ECO:0000256" key="3">
    <source>
        <dbReference type="SAM" id="MobiDB-lite"/>
    </source>
</evidence>
<evidence type="ECO:0000305" key="4"/>
<accession>Q5KEQ1</accession>
<keyword id="KW-0378">Hydrolase</keyword>
<keyword id="KW-0506">mRNA capping</keyword>
<keyword id="KW-0507">mRNA processing</keyword>
<keyword id="KW-0539">Nucleus</keyword>
<keyword id="KW-1185">Reference proteome</keyword>